<dbReference type="EMBL" id="AK076953">
    <property type="protein sequence ID" value="BAC36536.1"/>
    <property type="molecule type" value="mRNA"/>
</dbReference>
<dbReference type="EMBL" id="AL662780">
    <property type="status" value="NOT_ANNOTATED_CDS"/>
    <property type="molecule type" value="Genomic_DNA"/>
</dbReference>
<dbReference type="EMBL" id="AL669844">
    <property type="status" value="NOT_ANNOTATED_CDS"/>
    <property type="molecule type" value="Genomic_DNA"/>
</dbReference>
<dbReference type="EMBL" id="BC057026">
    <property type="protein sequence ID" value="AAH57026.1"/>
    <property type="molecule type" value="mRNA"/>
</dbReference>
<dbReference type="CCDS" id="CCDS24527.1"/>
<dbReference type="RefSeq" id="NP_776145.2">
    <property type="nucleotide sequence ID" value="NM_173784.3"/>
</dbReference>
<dbReference type="SMR" id="Q6PGH0"/>
<dbReference type="FunCoup" id="Q6PGH0">
    <property type="interactions" value="2119"/>
</dbReference>
<dbReference type="STRING" id="10090.ENSMUSP00000056765"/>
<dbReference type="iPTMnet" id="Q6PGH0"/>
<dbReference type="PhosphoSitePlus" id="Q6PGH0"/>
<dbReference type="SwissPalm" id="Q6PGH0"/>
<dbReference type="jPOST" id="Q6PGH0"/>
<dbReference type="PaxDb" id="10090-ENSMUSP00000056765"/>
<dbReference type="PeptideAtlas" id="Q6PGH0"/>
<dbReference type="ProteomicsDB" id="298113"/>
<dbReference type="Pumba" id="Q6PGH0"/>
<dbReference type="Antibodypedia" id="28892">
    <property type="antibodies" value="187 antibodies from 28 providers"/>
</dbReference>
<dbReference type="DNASU" id="327900"/>
<dbReference type="Ensembl" id="ENSMUST00000051053.5">
    <property type="protein sequence ID" value="ENSMUSP00000056765.5"/>
    <property type="gene ID" value="ENSMUSG00000044949.5"/>
</dbReference>
<dbReference type="GeneID" id="327900"/>
<dbReference type="KEGG" id="mmu:327900"/>
<dbReference type="UCSC" id="uc007ijr.1">
    <property type="organism name" value="mouse"/>
</dbReference>
<dbReference type="AGR" id="MGI:2444752"/>
<dbReference type="CTD" id="92181"/>
<dbReference type="MGI" id="MGI:2444752">
    <property type="gene designation" value="Ubtd2"/>
</dbReference>
<dbReference type="VEuPathDB" id="HostDB:ENSMUSG00000044949"/>
<dbReference type="eggNOG" id="KOG0013">
    <property type="taxonomic scope" value="Eukaryota"/>
</dbReference>
<dbReference type="GeneTree" id="ENSGT00940000156641"/>
<dbReference type="HOGENOM" id="CLU_070348_0_0_1"/>
<dbReference type="InParanoid" id="Q6PGH0"/>
<dbReference type="OMA" id="GTGGECQ"/>
<dbReference type="OrthoDB" id="1640476at2759"/>
<dbReference type="PhylomeDB" id="Q6PGH0"/>
<dbReference type="TreeFam" id="TF323925"/>
<dbReference type="BioGRID-ORCS" id="327900">
    <property type="hits" value="4 hits in 77 CRISPR screens"/>
</dbReference>
<dbReference type="ChiTaRS" id="Ubtd2">
    <property type="organism name" value="mouse"/>
</dbReference>
<dbReference type="PRO" id="PR:Q6PGH0"/>
<dbReference type="Proteomes" id="UP000000589">
    <property type="component" value="Chromosome 11"/>
</dbReference>
<dbReference type="RNAct" id="Q6PGH0">
    <property type="molecule type" value="protein"/>
</dbReference>
<dbReference type="Bgee" id="ENSMUSG00000044949">
    <property type="expression patterns" value="Expressed in embryonic post-anal tail and 73 other cell types or tissues"/>
</dbReference>
<dbReference type="GO" id="GO:0005737">
    <property type="term" value="C:cytoplasm"/>
    <property type="evidence" value="ECO:0007669"/>
    <property type="project" value="UniProtKB-SubCell"/>
</dbReference>
<dbReference type="CDD" id="cd17121">
    <property type="entry name" value="Ubl_UBTD2"/>
    <property type="match status" value="1"/>
</dbReference>
<dbReference type="Gene3D" id="3.10.20.90">
    <property type="entry name" value="Phosphatidylinositol 3-kinase Catalytic Subunit, Chain A, domain 1"/>
    <property type="match status" value="1"/>
</dbReference>
<dbReference type="Gene3D" id="1.20.225.20">
    <property type="entry name" value="Ub domain-containing protein, DC-UbP/UBTD2, N-terminal domain"/>
    <property type="match status" value="1"/>
</dbReference>
<dbReference type="InterPro" id="IPR032752">
    <property type="entry name" value="DC-UbP/UBTD2_N"/>
</dbReference>
<dbReference type="InterPro" id="IPR038169">
    <property type="entry name" value="DC-UbP/UBTD2_N_sf"/>
</dbReference>
<dbReference type="InterPro" id="IPR000626">
    <property type="entry name" value="Ubiquitin-like_dom"/>
</dbReference>
<dbReference type="InterPro" id="IPR029071">
    <property type="entry name" value="Ubiquitin-like_domsf"/>
</dbReference>
<dbReference type="InterPro" id="IPR039869">
    <property type="entry name" value="UBTD1/2"/>
</dbReference>
<dbReference type="PANTHER" id="PTHR13609">
    <property type="entry name" value="UBIQUITIN DOMAIN CONTAINING 1 PROTEIN-RELATED"/>
    <property type="match status" value="1"/>
</dbReference>
<dbReference type="Pfam" id="PF16455">
    <property type="entry name" value="UBD"/>
    <property type="match status" value="1"/>
</dbReference>
<dbReference type="Pfam" id="PF00240">
    <property type="entry name" value="ubiquitin"/>
    <property type="match status" value="1"/>
</dbReference>
<dbReference type="SMART" id="SM00213">
    <property type="entry name" value="UBQ"/>
    <property type="match status" value="1"/>
</dbReference>
<dbReference type="SUPFAM" id="SSF54236">
    <property type="entry name" value="Ubiquitin-like"/>
    <property type="match status" value="1"/>
</dbReference>
<dbReference type="PROSITE" id="PS50053">
    <property type="entry name" value="UBIQUITIN_2"/>
    <property type="match status" value="1"/>
</dbReference>
<sequence>MGGCVGAQHDSSGSLNENSDGTGVALGRNQPLKKEKPKWKSDYPMTDGQLRSKRDEFWDTAPAFEGRKEIWDALKAAAHAFESNDHELAQAIIDGANITLPHGALTECYDELGNRYQLPVYCLAPPINMIEEKSDIETLDIPEPPPNSGHESQLRLRLSTGKDLRLVVRSTDTVFHMKRRLHATEGVEPGSQRWFFSGRPLTDKMKLEELKIPKDYVVQVIVSQPVQTPTPVEN</sequence>
<keyword id="KW-0963">Cytoplasm</keyword>
<keyword id="KW-1185">Reference proteome</keyword>
<evidence type="ECO:0000250" key="1"/>
<evidence type="ECO:0000255" key="2">
    <source>
        <dbReference type="PROSITE-ProRule" id="PRU00214"/>
    </source>
</evidence>
<evidence type="ECO:0000256" key="3">
    <source>
        <dbReference type="SAM" id="MobiDB-lite"/>
    </source>
</evidence>
<evidence type="ECO:0000305" key="4"/>
<proteinExistence type="evidence at transcript level"/>
<comment type="subcellular location">
    <subcellularLocation>
        <location evidence="1">Cytoplasm</location>
    </subcellularLocation>
</comment>
<organism>
    <name type="scientific">Mus musculus</name>
    <name type="common">Mouse</name>
    <dbReference type="NCBI Taxonomy" id="10090"/>
    <lineage>
        <taxon>Eukaryota</taxon>
        <taxon>Metazoa</taxon>
        <taxon>Chordata</taxon>
        <taxon>Craniata</taxon>
        <taxon>Vertebrata</taxon>
        <taxon>Euteleostomi</taxon>
        <taxon>Mammalia</taxon>
        <taxon>Eutheria</taxon>
        <taxon>Euarchontoglires</taxon>
        <taxon>Glires</taxon>
        <taxon>Rodentia</taxon>
        <taxon>Myomorpha</taxon>
        <taxon>Muroidea</taxon>
        <taxon>Muridae</taxon>
        <taxon>Murinae</taxon>
        <taxon>Mus</taxon>
        <taxon>Mus</taxon>
    </lineage>
</organism>
<name>UBTD2_MOUSE</name>
<gene>
    <name type="primary">Ubtd2</name>
</gene>
<accession>Q6PGH0</accession>
<accession>A2AAY6</accession>
<accession>Q8C5Y1</accession>
<protein>
    <recommendedName>
        <fullName>Ubiquitin domain-containing protein 2</fullName>
    </recommendedName>
</protein>
<reference key="1">
    <citation type="journal article" date="2005" name="Science">
        <title>The transcriptional landscape of the mammalian genome.</title>
        <authorList>
            <person name="Carninci P."/>
            <person name="Kasukawa T."/>
            <person name="Katayama S."/>
            <person name="Gough J."/>
            <person name="Frith M.C."/>
            <person name="Maeda N."/>
            <person name="Oyama R."/>
            <person name="Ravasi T."/>
            <person name="Lenhard B."/>
            <person name="Wells C."/>
            <person name="Kodzius R."/>
            <person name="Shimokawa K."/>
            <person name="Bajic V.B."/>
            <person name="Brenner S.E."/>
            <person name="Batalov S."/>
            <person name="Forrest A.R."/>
            <person name="Zavolan M."/>
            <person name="Davis M.J."/>
            <person name="Wilming L.G."/>
            <person name="Aidinis V."/>
            <person name="Allen J.E."/>
            <person name="Ambesi-Impiombato A."/>
            <person name="Apweiler R."/>
            <person name="Aturaliya R.N."/>
            <person name="Bailey T.L."/>
            <person name="Bansal M."/>
            <person name="Baxter L."/>
            <person name="Beisel K.W."/>
            <person name="Bersano T."/>
            <person name="Bono H."/>
            <person name="Chalk A.M."/>
            <person name="Chiu K.P."/>
            <person name="Choudhary V."/>
            <person name="Christoffels A."/>
            <person name="Clutterbuck D.R."/>
            <person name="Crowe M.L."/>
            <person name="Dalla E."/>
            <person name="Dalrymple B.P."/>
            <person name="de Bono B."/>
            <person name="Della Gatta G."/>
            <person name="di Bernardo D."/>
            <person name="Down T."/>
            <person name="Engstrom P."/>
            <person name="Fagiolini M."/>
            <person name="Faulkner G."/>
            <person name="Fletcher C.F."/>
            <person name="Fukushima T."/>
            <person name="Furuno M."/>
            <person name="Futaki S."/>
            <person name="Gariboldi M."/>
            <person name="Georgii-Hemming P."/>
            <person name="Gingeras T.R."/>
            <person name="Gojobori T."/>
            <person name="Green R.E."/>
            <person name="Gustincich S."/>
            <person name="Harbers M."/>
            <person name="Hayashi Y."/>
            <person name="Hensch T.K."/>
            <person name="Hirokawa N."/>
            <person name="Hill D."/>
            <person name="Huminiecki L."/>
            <person name="Iacono M."/>
            <person name="Ikeo K."/>
            <person name="Iwama A."/>
            <person name="Ishikawa T."/>
            <person name="Jakt M."/>
            <person name="Kanapin A."/>
            <person name="Katoh M."/>
            <person name="Kawasawa Y."/>
            <person name="Kelso J."/>
            <person name="Kitamura H."/>
            <person name="Kitano H."/>
            <person name="Kollias G."/>
            <person name="Krishnan S.P."/>
            <person name="Kruger A."/>
            <person name="Kummerfeld S.K."/>
            <person name="Kurochkin I.V."/>
            <person name="Lareau L.F."/>
            <person name="Lazarevic D."/>
            <person name="Lipovich L."/>
            <person name="Liu J."/>
            <person name="Liuni S."/>
            <person name="McWilliam S."/>
            <person name="Madan Babu M."/>
            <person name="Madera M."/>
            <person name="Marchionni L."/>
            <person name="Matsuda H."/>
            <person name="Matsuzawa S."/>
            <person name="Miki H."/>
            <person name="Mignone F."/>
            <person name="Miyake S."/>
            <person name="Morris K."/>
            <person name="Mottagui-Tabar S."/>
            <person name="Mulder N."/>
            <person name="Nakano N."/>
            <person name="Nakauchi H."/>
            <person name="Ng P."/>
            <person name="Nilsson R."/>
            <person name="Nishiguchi S."/>
            <person name="Nishikawa S."/>
            <person name="Nori F."/>
            <person name="Ohara O."/>
            <person name="Okazaki Y."/>
            <person name="Orlando V."/>
            <person name="Pang K.C."/>
            <person name="Pavan W.J."/>
            <person name="Pavesi G."/>
            <person name="Pesole G."/>
            <person name="Petrovsky N."/>
            <person name="Piazza S."/>
            <person name="Reed J."/>
            <person name="Reid J.F."/>
            <person name="Ring B.Z."/>
            <person name="Ringwald M."/>
            <person name="Rost B."/>
            <person name="Ruan Y."/>
            <person name="Salzberg S.L."/>
            <person name="Sandelin A."/>
            <person name="Schneider C."/>
            <person name="Schoenbach C."/>
            <person name="Sekiguchi K."/>
            <person name="Semple C.A."/>
            <person name="Seno S."/>
            <person name="Sessa L."/>
            <person name="Sheng Y."/>
            <person name="Shibata Y."/>
            <person name="Shimada H."/>
            <person name="Shimada K."/>
            <person name="Silva D."/>
            <person name="Sinclair B."/>
            <person name="Sperling S."/>
            <person name="Stupka E."/>
            <person name="Sugiura K."/>
            <person name="Sultana R."/>
            <person name="Takenaka Y."/>
            <person name="Taki K."/>
            <person name="Tammoja K."/>
            <person name="Tan S.L."/>
            <person name="Tang S."/>
            <person name="Taylor M.S."/>
            <person name="Tegner J."/>
            <person name="Teichmann S.A."/>
            <person name="Ueda H.R."/>
            <person name="van Nimwegen E."/>
            <person name="Verardo R."/>
            <person name="Wei C.L."/>
            <person name="Yagi K."/>
            <person name="Yamanishi H."/>
            <person name="Zabarovsky E."/>
            <person name="Zhu S."/>
            <person name="Zimmer A."/>
            <person name="Hide W."/>
            <person name="Bult C."/>
            <person name="Grimmond S.M."/>
            <person name="Teasdale R.D."/>
            <person name="Liu E.T."/>
            <person name="Brusic V."/>
            <person name="Quackenbush J."/>
            <person name="Wahlestedt C."/>
            <person name="Mattick J.S."/>
            <person name="Hume D.A."/>
            <person name="Kai C."/>
            <person name="Sasaki D."/>
            <person name="Tomaru Y."/>
            <person name="Fukuda S."/>
            <person name="Kanamori-Katayama M."/>
            <person name="Suzuki M."/>
            <person name="Aoki J."/>
            <person name="Arakawa T."/>
            <person name="Iida J."/>
            <person name="Imamura K."/>
            <person name="Itoh M."/>
            <person name="Kato T."/>
            <person name="Kawaji H."/>
            <person name="Kawagashira N."/>
            <person name="Kawashima T."/>
            <person name="Kojima M."/>
            <person name="Kondo S."/>
            <person name="Konno H."/>
            <person name="Nakano K."/>
            <person name="Ninomiya N."/>
            <person name="Nishio T."/>
            <person name="Okada M."/>
            <person name="Plessy C."/>
            <person name="Shibata K."/>
            <person name="Shiraki T."/>
            <person name="Suzuki S."/>
            <person name="Tagami M."/>
            <person name="Waki K."/>
            <person name="Watahiki A."/>
            <person name="Okamura-Oho Y."/>
            <person name="Suzuki H."/>
            <person name="Kawai J."/>
            <person name="Hayashizaki Y."/>
        </authorList>
    </citation>
    <scope>NUCLEOTIDE SEQUENCE [LARGE SCALE MRNA]</scope>
    <source>
        <strain>C57BL/6J</strain>
        <tissue>Testis</tissue>
    </source>
</reference>
<reference key="2">
    <citation type="journal article" date="2009" name="PLoS Biol.">
        <title>Lineage-specific biology revealed by a finished genome assembly of the mouse.</title>
        <authorList>
            <person name="Church D.M."/>
            <person name="Goodstadt L."/>
            <person name="Hillier L.W."/>
            <person name="Zody M.C."/>
            <person name="Goldstein S."/>
            <person name="She X."/>
            <person name="Bult C.J."/>
            <person name="Agarwala R."/>
            <person name="Cherry J.L."/>
            <person name="DiCuccio M."/>
            <person name="Hlavina W."/>
            <person name="Kapustin Y."/>
            <person name="Meric P."/>
            <person name="Maglott D."/>
            <person name="Birtle Z."/>
            <person name="Marques A.C."/>
            <person name="Graves T."/>
            <person name="Zhou S."/>
            <person name="Teague B."/>
            <person name="Potamousis K."/>
            <person name="Churas C."/>
            <person name="Place M."/>
            <person name="Herschleb J."/>
            <person name="Runnheim R."/>
            <person name="Forrest D."/>
            <person name="Amos-Landgraf J."/>
            <person name="Schwartz D.C."/>
            <person name="Cheng Z."/>
            <person name="Lindblad-Toh K."/>
            <person name="Eichler E.E."/>
            <person name="Ponting C.P."/>
        </authorList>
    </citation>
    <scope>NUCLEOTIDE SEQUENCE [LARGE SCALE GENOMIC DNA]</scope>
    <source>
        <strain>C57BL/6J</strain>
    </source>
</reference>
<reference key="3">
    <citation type="journal article" date="2004" name="Genome Res.">
        <title>The status, quality, and expansion of the NIH full-length cDNA project: the Mammalian Gene Collection (MGC).</title>
        <authorList>
            <consortium name="The MGC Project Team"/>
        </authorList>
    </citation>
    <scope>NUCLEOTIDE SEQUENCE [LARGE SCALE MRNA]</scope>
    <source>
        <strain>C57BL/6J</strain>
        <tissue>Brain</tissue>
    </source>
</reference>
<feature type="chain" id="PRO_0000244333" description="Ubiquitin domain-containing protein 2">
    <location>
        <begin position="1"/>
        <end position="234"/>
    </location>
</feature>
<feature type="domain" description="Ubiquitin-like" evidence="2">
    <location>
        <begin position="152"/>
        <end position="227"/>
    </location>
</feature>
<feature type="region of interest" description="Disordered" evidence="3">
    <location>
        <begin position="1"/>
        <end position="46"/>
    </location>
</feature>
<feature type="compositionally biased region" description="Polar residues" evidence="3">
    <location>
        <begin position="9"/>
        <end position="21"/>
    </location>
</feature>
<feature type="compositionally biased region" description="Basic and acidic residues" evidence="3">
    <location>
        <begin position="32"/>
        <end position="41"/>
    </location>
</feature>
<feature type="sequence conflict" description="In Ref. 1; BAC36536." evidence="4" ref="1">
    <original>G</original>
    <variation>D</variation>
    <location>
        <position position="13"/>
    </location>
</feature>
<feature type="sequence conflict" description="In Ref. 1; BAC36536." evidence="4" ref="1">
    <original>V</original>
    <variation>L</variation>
    <location>
        <position position="187"/>
    </location>
</feature>